<keyword id="KW-0378">Hydrolase</keyword>
<keyword id="KW-0479">Metal-binding</keyword>
<keyword id="KW-0482">Metalloprotease</keyword>
<keyword id="KW-0645">Protease</keyword>
<keyword id="KW-0862">Zinc</keyword>
<protein>
    <recommendedName>
        <fullName>UPF0758 protein Patl_0046</fullName>
    </recommendedName>
</protein>
<reference key="1">
    <citation type="submission" date="2006-06" db="EMBL/GenBank/DDBJ databases">
        <title>Complete sequence of Pseudoalteromonas atlantica T6c.</title>
        <authorList>
            <consortium name="US DOE Joint Genome Institute"/>
            <person name="Copeland A."/>
            <person name="Lucas S."/>
            <person name="Lapidus A."/>
            <person name="Barry K."/>
            <person name="Detter J.C."/>
            <person name="Glavina del Rio T."/>
            <person name="Hammon N."/>
            <person name="Israni S."/>
            <person name="Dalin E."/>
            <person name="Tice H."/>
            <person name="Pitluck S."/>
            <person name="Saunders E."/>
            <person name="Brettin T."/>
            <person name="Bruce D."/>
            <person name="Han C."/>
            <person name="Tapia R."/>
            <person name="Gilna P."/>
            <person name="Schmutz J."/>
            <person name="Larimer F."/>
            <person name="Land M."/>
            <person name="Hauser L."/>
            <person name="Kyrpides N."/>
            <person name="Kim E."/>
            <person name="Karls A.C."/>
            <person name="Bartlett D."/>
            <person name="Higgins B.P."/>
            <person name="Richardson P."/>
        </authorList>
    </citation>
    <scope>NUCLEOTIDE SEQUENCE [LARGE SCALE GENOMIC DNA]</scope>
    <source>
        <strain>T6c / ATCC BAA-1087</strain>
    </source>
</reference>
<proteinExistence type="inferred from homology"/>
<accession>Q15ZW0</accession>
<name>Y046_PSEA6</name>
<evidence type="ECO:0000255" key="1">
    <source>
        <dbReference type="PROSITE-ProRule" id="PRU01182"/>
    </source>
</evidence>
<evidence type="ECO:0000305" key="2"/>
<dbReference type="EMBL" id="CP000388">
    <property type="protein sequence ID" value="ABG38578.1"/>
    <property type="molecule type" value="Genomic_DNA"/>
</dbReference>
<dbReference type="RefSeq" id="WP_011572992.1">
    <property type="nucleotide sequence ID" value="NC_008228.1"/>
</dbReference>
<dbReference type="SMR" id="Q15ZW0"/>
<dbReference type="STRING" id="342610.Patl_0046"/>
<dbReference type="KEGG" id="pat:Patl_0046"/>
<dbReference type="eggNOG" id="COG2003">
    <property type="taxonomic scope" value="Bacteria"/>
</dbReference>
<dbReference type="HOGENOM" id="CLU_073529_0_1_6"/>
<dbReference type="OrthoDB" id="9804482at2"/>
<dbReference type="Proteomes" id="UP000001981">
    <property type="component" value="Chromosome"/>
</dbReference>
<dbReference type="GO" id="GO:0046872">
    <property type="term" value="F:metal ion binding"/>
    <property type="evidence" value="ECO:0007669"/>
    <property type="project" value="UniProtKB-KW"/>
</dbReference>
<dbReference type="GO" id="GO:0008237">
    <property type="term" value="F:metallopeptidase activity"/>
    <property type="evidence" value="ECO:0007669"/>
    <property type="project" value="UniProtKB-KW"/>
</dbReference>
<dbReference type="GO" id="GO:0006508">
    <property type="term" value="P:proteolysis"/>
    <property type="evidence" value="ECO:0007669"/>
    <property type="project" value="UniProtKB-KW"/>
</dbReference>
<dbReference type="CDD" id="cd08071">
    <property type="entry name" value="MPN_DUF2466"/>
    <property type="match status" value="1"/>
</dbReference>
<dbReference type="Gene3D" id="1.10.150.20">
    <property type="entry name" value="5' to 3' exonuclease, C-terminal subdomain"/>
    <property type="match status" value="1"/>
</dbReference>
<dbReference type="Gene3D" id="3.40.140.10">
    <property type="entry name" value="Cytidine Deaminase, domain 2"/>
    <property type="match status" value="1"/>
</dbReference>
<dbReference type="InterPro" id="IPR037518">
    <property type="entry name" value="MPN"/>
</dbReference>
<dbReference type="InterPro" id="IPR025657">
    <property type="entry name" value="RadC_JAB"/>
</dbReference>
<dbReference type="InterPro" id="IPR010994">
    <property type="entry name" value="RuvA_2-like"/>
</dbReference>
<dbReference type="InterPro" id="IPR001405">
    <property type="entry name" value="UPF0758"/>
</dbReference>
<dbReference type="InterPro" id="IPR020891">
    <property type="entry name" value="UPF0758_CS"/>
</dbReference>
<dbReference type="InterPro" id="IPR046778">
    <property type="entry name" value="UPF0758_N"/>
</dbReference>
<dbReference type="NCBIfam" id="NF000642">
    <property type="entry name" value="PRK00024.1"/>
    <property type="match status" value="1"/>
</dbReference>
<dbReference type="NCBIfam" id="TIGR00608">
    <property type="entry name" value="radc"/>
    <property type="match status" value="1"/>
</dbReference>
<dbReference type="PANTHER" id="PTHR30471">
    <property type="entry name" value="DNA REPAIR PROTEIN RADC"/>
    <property type="match status" value="1"/>
</dbReference>
<dbReference type="PANTHER" id="PTHR30471:SF3">
    <property type="entry name" value="UPF0758 PROTEIN YEES-RELATED"/>
    <property type="match status" value="1"/>
</dbReference>
<dbReference type="Pfam" id="PF04002">
    <property type="entry name" value="RadC"/>
    <property type="match status" value="1"/>
</dbReference>
<dbReference type="Pfam" id="PF20582">
    <property type="entry name" value="UPF0758_N"/>
    <property type="match status" value="1"/>
</dbReference>
<dbReference type="SUPFAM" id="SSF102712">
    <property type="entry name" value="JAB1/MPN domain"/>
    <property type="match status" value="1"/>
</dbReference>
<dbReference type="SUPFAM" id="SSF47781">
    <property type="entry name" value="RuvA domain 2-like"/>
    <property type="match status" value="1"/>
</dbReference>
<dbReference type="PROSITE" id="PS50249">
    <property type="entry name" value="MPN"/>
    <property type="match status" value="1"/>
</dbReference>
<dbReference type="PROSITE" id="PS01302">
    <property type="entry name" value="UPF0758"/>
    <property type="match status" value="1"/>
</dbReference>
<organism>
    <name type="scientific">Pseudoalteromonas atlantica (strain T6c / ATCC BAA-1087)</name>
    <dbReference type="NCBI Taxonomy" id="3042615"/>
    <lineage>
        <taxon>Bacteria</taxon>
        <taxon>Pseudomonadati</taxon>
        <taxon>Pseudomonadota</taxon>
        <taxon>Gammaproteobacteria</taxon>
        <taxon>Alteromonadales</taxon>
        <taxon>Alteromonadaceae</taxon>
        <taxon>Paraglaciecola</taxon>
    </lineage>
</organism>
<gene>
    <name type="ordered locus">Patl_0046</name>
</gene>
<comment type="similarity">
    <text evidence="2">Belongs to the UPF0758 family.</text>
</comment>
<sequence length="224" mass="24729">MKITQWPAHERPREKLLTQGPDALSDAELLAIFLRTGIKGLSAVDLARNLLNTFGSLRGLISASQQDFCLAKGLGEAKFVQLQASIELSQRFFAEQLQRETVFNSAQQTKHFLIAQLRDEPNEVFGMLLLDSQHQLIKFRKMFFGTIDSASVYPRVLVKQALEDNAAAVILTHNHPSGVAEPSQADEHITARIISAMSLLDIKVLDHLVVGDGVAVSFAERGLI</sequence>
<feature type="chain" id="PRO_1000001675" description="UPF0758 protein Patl_0046">
    <location>
        <begin position="1"/>
        <end position="224"/>
    </location>
</feature>
<feature type="domain" description="MPN" evidence="1">
    <location>
        <begin position="102"/>
        <end position="224"/>
    </location>
</feature>
<feature type="short sequence motif" description="JAMM motif" evidence="1">
    <location>
        <begin position="173"/>
        <end position="186"/>
    </location>
</feature>
<feature type="binding site" evidence="1">
    <location>
        <position position="173"/>
    </location>
    <ligand>
        <name>Zn(2+)</name>
        <dbReference type="ChEBI" id="CHEBI:29105"/>
        <note>catalytic</note>
    </ligand>
</feature>
<feature type="binding site" evidence="1">
    <location>
        <position position="175"/>
    </location>
    <ligand>
        <name>Zn(2+)</name>
        <dbReference type="ChEBI" id="CHEBI:29105"/>
        <note>catalytic</note>
    </ligand>
</feature>
<feature type="binding site" evidence="1">
    <location>
        <position position="186"/>
    </location>
    <ligand>
        <name>Zn(2+)</name>
        <dbReference type="ChEBI" id="CHEBI:29105"/>
        <note>catalytic</note>
    </ligand>
</feature>